<name>CCME_LARHH</name>
<gene>
    <name evidence="1" type="primary">ccmE</name>
    <name evidence="1" type="synonym">cycJ</name>
    <name type="ordered locus">LHK_02090</name>
</gene>
<proteinExistence type="inferred from homology"/>
<sequence>MHPKRKKRLLIVLAGLAVVAVASGLILNAFRSNLVFFHTPTEIAAGQVDTDRVIRVGGLVEAGSVEREPGGLRVRFVITDTARSVPVRYEGILPDLFREGHGTVVQGRIGTDGVLAATQVLAKHDENYMPPEAADAIQRAGETVVQ</sequence>
<accession>C1D9H2</accession>
<reference key="1">
    <citation type="journal article" date="2009" name="PLoS Genet.">
        <title>The complete genome and proteome of Laribacter hongkongensis reveal potential mechanisms for adaptations to different temperatures and habitats.</title>
        <authorList>
            <person name="Woo P.C.Y."/>
            <person name="Lau S.K.P."/>
            <person name="Tse H."/>
            <person name="Teng J.L.L."/>
            <person name="Curreem S.O."/>
            <person name="Tsang A.K.L."/>
            <person name="Fan R.Y.Y."/>
            <person name="Wong G.K.M."/>
            <person name="Huang Y."/>
            <person name="Loman N.J."/>
            <person name="Snyder L.A.S."/>
            <person name="Cai J.J."/>
            <person name="Huang J.-D."/>
            <person name="Mak W."/>
            <person name="Pallen M.J."/>
            <person name="Lok S."/>
            <person name="Yuen K.-Y."/>
        </authorList>
    </citation>
    <scope>NUCLEOTIDE SEQUENCE [LARGE SCALE GENOMIC DNA]</scope>
    <source>
        <strain>HLHK9</strain>
    </source>
</reference>
<protein>
    <recommendedName>
        <fullName evidence="1">Cytochrome c-type biogenesis protein CcmE</fullName>
    </recommendedName>
    <alternativeName>
        <fullName evidence="1">Cytochrome c maturation protein E</fullName>
    </alternativeName>
    <alternativeName>
        <fullName evidence="1">Heme chaperone CcmE</fullName>
    </alternativeName>
</protein>
<feature type="chain" id="PRO_1000216214" description="Cytochrome c-type biogenesis protein CcmE">
    <location>
        <begin position="1"/>
        <end position="146"/>
    </location>
</feature>
<feature type="topological domain" description="Cytoplasmic" evidence="1">
    <location>
        <begin position="1"/>
        <end position="8"/>
    </location>
</feature>
<feature type="transmembrane region" description="Helical; Signal-anchor for type II membrane protein" evidence="1">
    <location>
        <begin position="9"/>
        <end position="29"/>
    </location>
</feature>
<feature type="topological domain" description="Periplasmic" evidence="1">
    <location>
        <begin position="30"/>
        <end position="146"/>
    </location>
</feature>
<feature type="binding site" description="covalent" evidence="1">
    <location>
        <position position="124"/>
    </location>
    <ligand>
        <name>heme</name>
        <dbReference type="ChEBI" id="CHEBI:30413"/>
    </ligand>
</feature>
<feature type="binding site" description="axial binding residue" evidence="1">
    <location>
        <position position="128"/>
    </location>
    <ligand>
        <name>heme</name>
        <dbReference type="ChEBI" id="CHEBI:30413"/>
    </ligand>
    <ligandPart>
        <name>Fe</name>
        <dbReference type="ChEBI" id="CHEBI:18248"/>
    </ligandPart>
</feature>
<comment type="function">
    <text evidence="1">Heme chaperone required for the biogenesis of c-type cytochromes. Transiently binds heme delivered by CcmC and transfers the heme to apo-cytochromes in a process facilitated by CcmF and CcmH.</text>
</comment>
<comment type="subcellular location">
    <subcellularLocation>
        <location evidence="1">Cell inner membrane</location>
        <topology evidence="1">Single-pass type II membrane protein</topology>
        <orientation evidence="1">Periplasmic side</orientation>
    </subcellularLocation>
</comment>
<comment type="similarity">
    <text evidence="1">Belongs to the CcmE/CycJ family.</text>
</comment>
<keyword id="KW-0997">Cell inner membrane</keyword>
<keyword id="KW-1003">Cell membrane</keyword>
<keyword id="KW-0201">Cytochrome c-type biogenesis</keyword>
<keyword id="KW-0349">Heme</keyword>
<keyword id="KW-0408">Iron</keyword>
<keyword id="KW-0472">Membrane</keyword>
<keyword id="KW-0479">Metal-binding</keyword>
<keyword id="KW-1185">Reference proteome</keyword>
<keyword id="KW-0735">Signal-anchor</keyword>
<keyword id="KW-0812">Transmembrane</keyword>
<keyword id="KW-1133">Transmembrane helix</keyword>
<organism>
    <name type="scientific">Laribacter hongkongensis (strain HLHK9)</name>
    <dbReference type="NCBI Taxonomy" id="557598"/>
    <lineage>
        <taxon>Bacteria</taxon>
        <taxon>Pseudomonadati</taxon>
        <taxon>Pseudomonadota</taxon>
        <taxon>Betaproteobacteria</taxon>
        <taxon>Neisseriales</taxon>
        <taxon>Aquaspirillaceae</taxon>
        <taxon>Laribacter</taxon>
    </lineage>
</organism>
<evidence type="ECO:0000255" key="1">
    <source>
        <dbReference type="HAMAP-Rule" id="MF_01959"/>
    </source>
</evidence>
<dbReference type="EMBL" id="CP001154">
    <property type="protein sequence ID" value="ACO75074.1"/>
    <property type="molecule type" value="Genomic_DNA"/>
</dbReference>
<dbReference type="RefSeq" id="WP_012697560.1">
    <property type="nucleotide sequence ID" value="NC_012559.1"/>
</dbReference>
<dbReference type="SMR" id="C1D9H2"/>
<dbReference type="STRING" id="557598.LHK_02090"/>
<dbReference type="KEGG" id="lhk:LHK_02090"/>
<dbReference type="eggNOG" id="COG2332">
    <property type="taxonomic scope" value="Bacteria"/>
</dbReference>
<dbReference type="HOGENOM" id="CLU_079503_1_1_4"/>
<dbReference type="Proteomes" id="UP000002010">
    <property type="component" value="Chromosome"/>
</dbReference>
<dbReference type="GO" id="GO:0005886">
    <property type="term" value="C:plasma membrane"/>
    <property type="evidence" value="ECO:0007669"/>
    <property type="project" value="UniProtKB-SubCell"/>
</dbReference>
<dbReference type="GO" id="GO:0020037">
    <property type="term" value="F:heme binding"/>
    <property type="evidence" value="ECO:0007669"/>
    <property type="project" value="InterPro"/>
</dbReference>
<dbReference type="GO" id="GO:0046872">
    <property type="term" value="F:metal ion binding"/>
    <property type="evidence" value="ECO:0007669"/>
    <property type="project" value="UniProtKB-KW"/>
</dbReference>
<dbReference type="GO" id="GO:0017004">
    <property type="term" value="P:cytochrome complex assembly"/>
    <property type="evidence" value="ECO:0007669"/>
    <property type="project" value="UniProtKB-KW"/>
</dbReference>
<dbReference type="FunFam" id="2.40.50.140:FF:000104">
    <property type="entry name" value="Cytochrome c-type biogenesis protein CcmE"/>
    <property type="match status" value="1"/>
</dbReference>
<dbReference type="Gene3D" id="2.40.50.140">
    <property type="entry name" value="Nucleic acid-binding proteins"/>
    <property type="match status" value="1"/>
</dbReference>
<dbReference type="HAMAP" id="MF_01959">
    <property type="entry name" value="CcmE"/>
    <property type="match status" value="1"/>
</dbReference>
<dbReference type="InterPro" id="IPR004329">
    <property type="entry name" value="CcmE"/>
</dbReference>
<dbReference type="InterPro" id="IPR036127">
    <property type="entry name" value="CcmE-like_sf"/>
</dbReference>
<dbReference type="InterPro" id="IPR012340">
    <property type="entry name" value="NA-bd_OB-fold"/>
</dbReference>
<dbReference type="NCBIfam" id="NF009727">
    <property type="entry name" value="PRK13254.1-1"/>
    <property type="match status" value="1"/>
</dbReference>
<dbReference type="NCBIfam" id="NF009729">
    <property type="entry name" value="PRK13254.1-3"/>
    <property type="match status" value="1"/>
</dbReference>
<dbReference type="NCBIfam" id="NF009731">
    <property type="entry name" value="PRK13254.1-5"/>
    <property type="match status" value="1"/>
</dbReference>
<dbReference type="PANTHER" id="PTHR34128">
    <property type="entry name" value="CYTOCHROME C-TYPE BIOGENESIS PROTEIN CCME HOMOLOG, MITOCHONDRIAL"/>
    <property type="match status" value="1"/>
</dbReference>
<dbReference type="PANTHER" id="PTHR34128:SF2">
    <property type="entry name" value="CYTOCHROME C-TYPE BIOGENESIS PROTEIN CCME HOMOLOG, MITOCHONDRIAL"/>
    <property type="match status" value="1"/>
</dbReference>
<dbReference type="Pfam" id="PF03100">
    <property type="entry name" value="CcmE"/>
    <property type="match status" value="1"/>
</dbReference>
<dbReference type="SUPFAM" id="SSF82093">
    <property type="entry name" value="Heme chaperone CcmE"/>
    <property type="match status" value="1"/>
</dbReference>